<comment type="function">
    <text evidence="1">An accessory protein needed during the final step in the assembly of 30S ribosomal subunit, possibly for assembly of the head region. Essential for efficient processing of 16S rRNA. May be needed both before and after RbfA during the maturation of 16S rRNA. It has affinity for free ribosomal 30S subunits but not for 70S ribosomes.</text>
</comment>
<comment type="subunit">
    <text evidence="1">Binds ribosomal protein uS19.</text>
</comment>
<comment type="subcellular location">
    <subcellularLocation>
        <location evidence="1">Cytoplasm</location>
    </subcellularLocation>
</comment>
<comment type="domain">
    <text evidence="1">The PRC barrel domain binds ribosomal protein uS19.</text>
</comment>
<comment type="similarity">
    <text evidence="1">Belongs to the RimM family.</text>
</comment>
<evidence type="ECO:0000255" key="1">
    <source>
        <dbReference type="HAMAP-Rule" id="MF_00014"/>
    </source>
</evidence>
<sequence>MAAADESSWPADVVEVAKVIDAWGVKGWFRVHPYAADAQAVFTSRRWYLQGPDNRPRPKDAPALPRLLHVTEVKEHGDGIVACAPEVADRSAAEALKGARIFVSRASFPTVGDGEYYWIDLIGLSVVNRDGESLGTVTDLIDTGPHSVLRLGYPSVDDKGAPVEGERLIPFVAAYIDSVQLDQKRIVADWGLDY</sequence>
<protein>
    <recommendedName>
        <fullName evidence="1">Ribosome maturation factor RimM</fullName>
    </recommendedName>
</protein>
<feature type="chain" id="PRO_0000351768" description="Ribosome maturation factor RimM">
    <location>
        <begin position="1"/>
        <end position="194"/>
    </location>
</feature>
<feature type="domain" description="PRC barrel" evidence="1">
    <location>
        <begin position="113"/>
        <end position="194"/>
    </location>
</feature>
<dbReference type="EMBL" id="CP001013">
    <property type="protein sequence ID" value="ACB32957.1"/>
    <property type="molecule type" value="Genomic_DNA"/>
</dbReference>
<dbReference type="RefSeq" id="WP_012345719.1">
    <property type="nucleotide sequence ID" value="NC_010524.1"/>
</dbReference>
<dbReference type="SMR" id="B1Y0H6"/>
<dbReference type="STRING" id="395495.Lcho_0682"/>
<dbReference type="KEGG" id="lch:Lcho_0682"/>
<dbReference type="eggNOG" id="COG0806">
    <property type="taxonomic scope" value="Bacteria"/>
</dbReference>
<dbReference type="HOGENOM" id="CLU_077636_1_0_4"/>
<dbReference type="OrthoDB" id="9783509at2"/>
<dbReference type="Proteomes" id="UP000001693">
    <property type="component" value="Chromosome"/>
</dbReference>
<dbReference type="GO" id="GO:0005737">
    <property type="term" value="C:cytoplasm"/>
    <property type="evidence" value="ECO:0007669"/>
    <property type="project" value="UniProtKB-SubCell"/>
</dbReference>
<dbReference type="GO" id="GO:0005840">
    <property type="term" value="C:ribosome"/>
    <property type="evidence" value="ECO:0007669"/>
    <property type="project" value="InterPro"/>
</dbReference>
<dbReference type="GO" id="GO:0043022">
    <property type="term" value="F:ribosome binding"/>
    <property type="evidence" value="ECO:0007669"/>
    <property type="project" value="InterPro"/>
</dbReference>
<dbReference type="GO" id="GO:0042274">
    <property type="term" value="P:ribosomal small subunit biogenesis"/>
    <property type="evidence" value="ECO:0007669"/>
    <property type="project" value="UniProtKB-UniRule"/>
</dbReference>
<dbReference type="GO" id="GO:0006364">
    <property type="term" value="P:rRNA processing"/>
    <property type="evidence" value="ECO:0007669"/>
    <property type="project" value="UniProtKB-UniRule"/>
</dbReference>
<dbReference type="Gene3D" id="2.30.30.240">
    <property type="entry name" value="PRC-barrel domain"/>
    <property type="match status" value="1"/>
</dbReference>
<dbReference type="Gene3D" id="2.40.30.60">
    <property type="entry name" value="RimM"/>
    <property type="match status" value="1"/>
</dbReference>
<dbReference type="HAMAP" id="MF_00014">
    <property type="entry name" value="Ribosome_mat_RimM"/>
    <property type="match status" value="1"/>
</dbReference>
<dbReference type="InterPro" id="IPR011033">
    <property type="entry name" value="PRC_barrel-like_sf"/>
</dbReference>
<dbReference type="InterPro" id="IPR056792">
    <property type="entry name" value="PRC_RimM"/>
</dbReference>
<dbReference type="InterPro" id="IPR011961">
    <property type="entry name" value="RimM"/>
</dbReference>
<dbReference type="InterPro" id="IPR002676">
    <property type="entry name" value="RimM_N"/>
</dbReference>
<dbReference type="InterPro" id="IPR036976">
    <property type="entry name" value="RimM_N_sf"/>
</dbReference>
<dbReference type="InterPro" id="IPR009000">
    <property type="entry name" value="Transl_B-barrel_sf"/>
</dbReference>
<dbReference type="NCBIfam" id="TIGR02273">
    <property type="entry name" value="16S_RimM"/>
    <property type="match status" value="1"/>
</dbReference>
<dbReference type="PANTHER" id="PTHR33692">
    <property type="entry name" value="RIBOSOME MATURATION FACTOR RIMM"/>
    <property type="match status" value="1"/>
</dbReference>
<dbReference type="PANTHER" id="PTHR33692:SF1">
    <property type="entry name" value="RIBOSOME MATURATION FACTOR RIMM"/>
    <property type="match status" value="1"/>
</dbReference>
<dbReference type="Pfam" id="PF24986">
    <property type="entry name" value="PRC_RimM"/>
    <property type="match status" value="1"/>
</dbReference>
<dbReference type="Pfam" id="PF01782">
    <property type="entry name" value="RimM"/>
    <property type="match status" value="1"/>
</dbReference>
<dbReference type="SUPFAM" id="SSF50346">
    <property type="entry name" value="PRC-barrel domain"/>
    <property type="match status" value="1"/>
</dbReference>
<dbReference type="SUPFAM" id="SSF50447">
    <property type="entry name" value="Translation proteins"/>
    <property type="match status" value="1"/>
</dbReference>
<accession>B1Y0H6</accession>
<name>RIMM_LEPCP</name>
<keyword id="KW-0143">Chaperone</keyword>
<keyword id="KW-0963">Cytoplasm</keyword>
<keyword id="KW-1185">Reference proteome</keyword>
<keyword id="KW-0690">Ribosome biogenesis</keyword>
<keyword id="KW-0698">rRNA processing</keyword>
<gene>
    <name evidence="1" type="primary">rimM</name>
    <name type="ordered locus">Lcho_0682</name>
</gene>
<organism>
    <name type="scientific">Leptothrix cholodnii (strain ATCC 51168 / LMG 8142 / SP-6)</name>
    <name type="common">Leptothrix discophora (strain SP-6)</name>
    <dbReference type="NCBI Taxonomy" id="395495"/>
    <lineage>
        <taxon>Bacteria</taxon>
        <taxon>Pseudomonadati</taxon>
        <taxon>Pseudomonadota</taxon>
        <taxon>Betaproteobacteria</taxon>
        <taxon>Burkholderiales</taxon>
        <taxon>Sphaerotilaceae</taxon>
        <taxon>Leptothrix</taxon>
    </lineage>
</organism>
<proteinExistence type="inferred from homology"/>
<reference key="1">
    <citation type="submission" date="2008-03" db="EMBL/GenBank/DDBJ databases">
        <title>Complete sequence of Leptothrix cholodnii SP-6.</title>
        <authorList>
            <consortium name="US DOE Joint Genome Institute"/>
            <person name="Copeland A."/>
            <person name="Lucas S."/>
            <person name="Lapidus A."/>
            <person name="Glavina del Rio T."/>
            <person name="Dalin E."/>
            <person name="Tice H."/>
            <person name="Bruce D."/>
            <person name="Goodwin L."/>
            <person name="Pitluck S."/>
            <person name="Chertkov O."/>
            <person name="Brettin T."/>
            <person name="Detter J.C."/>
            <person name="Han C."/>
            <person name="Kuske C.R."/>
            <person name="Schmutz J."/>
            <person name="Larimer F."/>
            <person name="Land M."/>
            <person name="Hauser L."/>
            <person name="Kyrpides N."/>
            <person name="Lykidis A."/>
            <person name="Emerson D."/>
            <person name="Richardson P."/>
        </authorList>
    </citation>
    <scope>NUCLEOTIDE SEQUENCE [LARGE SCALE GENOMIC DNA]</scope>
    <source>
        <strain>ATCC 51168 / LMG 8142 / SP-6</strain>
    </source>
</reference>